<feature type="signal peptide" evidence="1">
    <location>
        <begin position="1"/>
        <end position="23"/>
    </location>
</feature>
<feature type="chain" id="PRO_5000345648" description="UPF0312 protein YPTS_2311">
    <location>
        <begin position="24"/>
        <end position="192"/>
    </location>
</feature>
<name>Y2311_YERPB</name>
<gene>
    <name type="ordered locus">YPTS_2311</name>
</gene>
<dbReference type="EMBL" id="CP001048">
    <property type="protein sequence ID" value="ACC89272.1"/>
    <property type="molecule type" value="Genomic_DNA"/>
</dbReference>
<dbReference type="RefSeq" id="WP_002211011.1">
    <property type="nucleotide sequence ID" value="NZ_CP009780.1"/>
</dbReference>
<dbReference type="SMR" id="B2K4S6"/>
<dbReference type="KEGG" id="ypb:YPTS_2311"/>
<dbReference type="PATRIC" id="fig|502801.10.peg.1710"/>
<dbReference type="GO" id="GO:0042597">
    <property type="term" value="C:periplasmic space"/>
    <property type="evidence" value="ECO:0007669"/>
    <property type="project" value="UniProtKB-SubCell"/>
</dbReference>
<dbReference type="Gene3D" id="2.40.128.110">
    <property type="entry name" value="Lipid/polyisoprenoid-binding, YceI-like"/>
    <property type="match status" value="1"/>
</dbReference>
<dbReference type="HAMAP" id="MF_00780">
    <property type="entry name" value="UPF0312"/>
    <property type="match status" value="1"/>
</dbReference>
<dbReference type="InterPro" id="IPR007372">
    <property type="entry name" value="Lipid/polyisoprenoid-bd_YceI"/>
</dbReference>
<dbReference type="InterPro" id="IPR036761">
    <property type="entry name" value="TTHA0802/YceI-like_sf"/>
</dbReference>
<dbReference type="InterPro" id="IPR023480">
    <property type="entry name" value="UPF0312/YceI"/>
</dbReference>
<dbReference type="NCBIfam" id="NF002994">
    <property type="entry name" value="PRK03757.1"/>
    <property type="match status" value="1"/>
</dbReference>
<dbReference type="PANTHER" id="PTHR34406">
    <property type="entry name" value="PROTEIN YCEI"/>
    <property type="match status" value="1"/>
</dbReference>
<dbReference type="PANTHER" id="PTHR34406:SF1">
    <property type="entry name" value="PROTEIN YCEI"/>
    <property type="match status" value="1"/>
</dbReference>
<dbReference type="Pfam" id="PF04264">
    <property type="entry name" value="YceI"/>
    <property type="match status" value="1"/>
</dbReference>
<dbReference type="SMART" id="SM00867">
    <property type="entry name" value="YceI"/>
    <property type="match status" value="1"/>
</dbReference>
<dbReference type="SUPFAM" id="SSF101874">
    <property type="entry name" value="YceI-like"/>
    <property type="match status" value="1"/>
</dbReference>
<organism>
    <name type="scientific">Yersinia pseudotuberculosis serotype IB (strain PB1/+)</name>
    <dbReference type="NCBI Taxonomy" id="502801"/>
    <lineage>
        <taxon>Bacteria</taxon>
        <taxon>Pseudomonadati</taxon>
        <taxon>Pseudomonadota</taxon>
        <taxon>Gammaproteobacteria</taxon>
        <taxon>Enterobacterales</taxon>
        <taxon>Yersiniaceae</taxon>
        <taxon>Yersinia</taxon>
    </lineage>
</organism>
<protein>
    <recommendedName>
        <fullName evidence="1">UPF0312 protein YPTS_2311</fullName>
    </recommendedName>
</protein>
<evidence type="ECO:0000255" key="1">
    <source>
        <dbReference type="HAMAP-Rule" id="MF_00780"/>
    </source>
</evidence>
<accession>B2K4S6</accession>
<proteinExistence type="inferred from homology"/>
<comment type="subcellular location">
    <subcellularLocation>
        <location evidence="1">Periplasm</location>
    </subcellularLocation>
</comment>
<comment type="similarity">
    <text evidence="1">Belongs to the UPF0312 family. Type 1 subfamily.</text>
</comment>
<sequence>MINKTLLGLSLGALMFTAGSAVAADYKIDKEGQHAFIEFRIKHLGYSWLYGSFNDFDGSFTFDDKNPAADKVNVVINTNSVDTNHAERDKHLRGKSFLNVAKFPQATFESTEVKKNGDGYSVIGNLTLNGVTKPVTLESKLTGQGNDPWGGYRAGFEANGNIKLKDFNITTDLGPASQEVELILSVEGVQVK</sequence>
<reference key="1">
    <citation type="submission" date="2008-04" db="EMBL/GenBank/DDBJ databases">
        <title>Complete sequence of Yersinia pseudotuberculosis PB1/+.</title>
        <authorList>
            <person name="Copeland A."/>
            <person name="Lucas S."/>
            <person name="Lapidus A."/>
            <person name="Glavina del Rio T."/>
            <person name="Dalin E."/>
            <person name="Tice H."/>
            <person name="Bruce D."/>
            <person name="Goodwin L."/>
            <person name="Pitluck S."/>
            <person name="Munk A.C."/>
            <person name="Brettin T."/>
            <person name="Detter J.C."/>
            <person name="Han C."/>
            <person name="Tapia R."/>
            <person name="Schmutz J."/>
            <person name="Larimer F."/>
            <person name="Land M."/>
            <person name="Hauser L."/>
            <person name="Challacombe J.F."/>
            <person name="Green L."/>
            <person name="Lindler L.E."/>
            <person name="Nikolich M.P."/>
            <person name="Richardson P."/>
        </authorList>
    </citation>
    <scope>NUCLEOTIDE SEQUENCE [LARGE SCALE GENOMIC DNA]</scope>
    <source>
        <strain>PB1/+</strain>
    </source>
</reference>
<keyword id="KW-0574">Periplasm</keyword>
<keyword id="KW-0732">Signal</keyword>